<gene>
    <name evidence="1" type="primary">rplP</name>
    <name type="ordered locus">CBU_0245</name>
</gene>
<proteinExistence type="inferred from homology"/>
<sequence>MLQPSNRKYRKDFKGRNRGVASRGNRVSFGEFGLKATECARITARQLEAARRTIARHIKRGGKITIRIFPDKPITKKPLEVRQGKGKGSVEYWVALVQPGRMIFEIEGVDEALAREAFSRAAAKLPLKCLFVKRTVM</sequence>
<reference key="1">
    <citation type="journal article" date="2003" name="Proc. Natl. Acad. Sci. U.S.A.">
        <title>Complete genome sequence of the Q-fever pathogen, Coxiella burnetii.</title>
        <authorList>
            <person name="Seshadri R."/>
            <person name="Paulsen I.T."/>
            <person name="Eisen J.A."/>
            <person name="Read T.D."/>
            <person name="Nelson K.E."/>
            <person name="Nelson W.C."/>
            <person name="Ward N.L."/>
            <person name="Tettelin H."/>
            <person name="Davidsen T.M."/>
            <person name="Beanan M.J."/>
            <person name="DeBoy R.T."/>
            <person name="Daugherty S.C."/>
            <person name="Brinkac L.M."/>
            <person name="Madupu R."/>
            <person name="Dodson R.J."/>
            <person name="Khouri H.M."/>
            <person name="Lee K.H."/>
            <person name="Carty H.A."/>
            <person name="Scanlan D."/>
            <person name="Heinzen R.A."/>
            <person name="Thompson H.A."/>
            <person name="Samuel J.E."/>
            <person name="Fraser C.M."/>
            <person name="Heidelberg J.F."/>
        </authorList>
    </citation>
    <scope>NUCLEOTIDE SEQUENCE [LARGE SCALE GENOMIC DNA]</scope>
    <source>
        <strain>RSA 493 / Nine Mile phase I</strain>
    </source>
</reference>
<comment type="function">
    <text evidence="1">Binds 23S rRNA and is also seen to make contacts with the A and possibly P site tRNAs.</text>
</comment>
<comment type="subunit">
    <text evidence="1">Part of the 50S ribosomal subunit.</text>
</comment>
<comment type="similarity">
    <text evidence="1">Belongs to the universal ribosomal protein uL16 family.</text>
</comment>
<name>RL16_COXBU</name>
<dbReference type="EMBL" id="AE016828">
    <property type="protein sequence ID" value="AAO89803.1"/>
    <property type="molecule type" value="Genomic_DNA"/>
</dbReference>
<dbReference type="RefSeq" id="NP_819289.1">
    <property type="nucleotide sequence ID" value="NC_002971.4"/>
</dbReference>
<dbReference type="RefSeq" id="WP_010957459.1">
    <property type="nucleotide sequence ID" value="NZ_CCYB01000060.1"/>
</dbReference>
<dbReference type="SMR" id="Q83ER9"/>
<dbReference type="STRING" id="227377.CBU_0245"/>
<dbReference type="DNASU" id="1208126"/>
<dbReference type="EnsemblBacteria" id="AAO89803">
    <property type="protein sequence ID" value="AAO89803"/>
    <property type="gene ID" value="CBU_0245"/>
</dbReference>
<dbReference type="GeneID" id="1208126"/>
<dbReference type="KEGG" id="cbu:CBU_0245"/>
<dbReference type="PATRIC" id="fig|227377.7.peg.240"/>
<dbReference type="eggNOG" id="COG0197">
    <property type="taxonomic scope" value="Bacteria"/>
</dbReference>
<dbReference type="HOGENOM" id="CLU_078858_2_1_6"/>
<dbReference type="OrthoDB" id="9802589at2"/>
<dbReference type="Proteomes" id="UP000002671">
    <property type="component" value="Chromosome"/>
</dbReference>
<dbReference type="GO" id="GO:0022625">
    <property type="term" value="C:cytosolic large ribosomal subunit"/>
    <property type="evidence" value="ECO:0000318"/>
    <property type="project" value="GO_Central"/>
</dbReference>
<dbReference type="GO" id="GO:0019843">
    <property type="term" value="F:rRNA binding"/>
    <property type="evidence" value="ECO:0000318"/>
    <property type="project" value="GO_Central"/>
</dbReference>
<dbReference type="GO" id="GO:0003735">
    <property type="term" value="F:structural constituent of ribosome"/>
    <property type="evidence" value="ECO:0000318"/>
    <property type="project" value="GO_Central"/>
</dbReference>
<dbReference type="GO" id="GO:0000049">
    <property type="term" value="F:tRNA binding"/>
    <property type="evidence" value="ECO:0007669"/>
    <property type="project" value="UniProtKB-KW"/>
</dbReference>
<dbReference type="GO" id="GO:0006412">
    <property type="term" value="P:translation"/>
    <property type="evidence" value="ECO:0007669"/>
    <property type="project" value="UniProtKB-UniRule"/>
</dbReference>
<dbReference type="CDD" id="cd01433">
    <property type="entry name" value="Ribosomal_L16_L10e"/>
    <property type="match status" value="1"/>
</dbReference>
<dbReference type="FunFam" id="3.90.1170.10:FF:000001">
    <property type="entry name" value="50S ribosomal protein L16"/>
    <property type="match status" value="1"/>
</dbReference>
<dbReference type="Gene3D" id="3.90.1170.10">
    <property type="entry name" value="Ribosomal protein L10e/L16"/>
    <property type="match status" value="1"/>
</dbReference>
<dbReference type="HAMAP" id="MF_01342">
    <property type="entry name" value="Ribosomal_uL16"/>
    <property type="match status" value="1"/>
</dbReference>
<dbReference type="InterPro" id="IPR047873">
    <property type="entry name" value="Ribosomal_uL16"/>
</dbReference>
<dbReference type="InterPro" id="IPR000114">
    <property type="entry name" value="Ribosomal_uL16_bact-type"/>
</dbReference>
<dbReference type="InterPro" id="IPR016180">
    <property type="entry name" value="Ribosomal_uL16_dom"/>
</dbReference>
<dbReference type="InterPro" id="IPR036920">
    <property type="entry name" value="Ribosomal_uL16_sf"/>
</dbReference>
<dbReference type="NCBIfam" id="TIGR01164">
    <property type="entry name" value="rplP_bact"/>
    <property type="match status" value="1"/>
</dbReference>
<dbReference type="PANTHER" id="PTHR12220">
    <property type="entry name" value="50S/60S RIBOSOMAL PROTEIN L16"/>
    <property type="match status" value="1"/>
</dbReference>
<dbReference type="PANTHER" id="PTHR12220:SF13">
    <property type="entry name" value="LARGE RIBOSOMAL SUBUNIT PROTEIN UL16M"/>
    <property type="match status" value="1"/>
</dbReference>
<dbReference type="Pfam" id="PF00252">
    <property type="entry name" value="Ribosomal_L16"/>
    <property type="match status" value="1"/>
</dbReference>
<dbReference type="PRINTS" id="PR00060">
    <property type="entry name" value="RIBOSOMALL16"/>
</dbReference>
<dbReference type="SUPFAM" id="SSF54686">
    <property type="entry name" value="Ribosomal protein L16p/L10e"/>
    <property type="match status" value="1"/>
</dbReference>
<evidence type="ECO:0000255" key="1">
    <source>
        <dbReference type="HAMAP-Rule" id="MF_01342"/>
    </source>
</evidence>
<evidence type="ECO:0000256" key="2">
    <source>
        <dbReference type="SAM" id="MobiDB-lite"/>
    </source>
</evidence>
<evidence type="ECO:0000305" key="3"/>
<keyword id="KW-1185">Reference proteome</keyword>
<keyword id="KW-0687">Ribonucleoprotein</keyword>
<keyword id="KW-0689">Ribosomal protein</keyword>
<keyword id="KW-0694">RNA-binding</keyword>
<keyword id="KW-0699">rRNA-binding</keyword>
<keyword id="KW-0820">tRNA-binding</keyword>
<organism>
    <name type="scientific">Coxiella burnetii (strain RSA 493 / Nine Mile phase I)</name>
    <dbReference type="NCBI Taxonomy" id="227377"/>
    <lineage>
        <taxon>Bacteria</taxon>
        <taxon>Pseudomonadati</taxon>
        <taxon>Pseudomonadota</taxon>
        <taxon>Gammaproteobacteria</taxon>
        <taxon>Legionellales</taxon>
        <taxon>Coxiellaceae</taxon>
        <taxon>Coxiella</taxon>
    </lineage>
</organism>
<protein>
    <recommendedName>
        <fullName evidence="1">Large ribosomal subunit protein uL16</fullName>
    </recommendedName>
    <alternativeName>
        <fullName evidence="3">50S ribosomal protein L16</fullName>
    </alternativeName>
</protein>
<feature type="chain" id="PRO_0000062089" description="Large ribosomal subunit protein uL16">
    <location>
        <begin position="1"/>
        <end position="137"/>
    </location>
</feature>
<feature type="region of interest" description="Disordered" evidence="2">
    <location>
        <begin position="1"/>
        <end position="20"/>
    </location>
</feature>
<feature type="compositionally biased region" description="Basic residues" evidence="2">
    <location>
        <begin position="7"/>
        <end position="17"/>
    </location>
</feature>
<accession>Q83ER9</accession>